<comment type="function">
    <text evidence="3">Catalyzes the 2-beta-hydroxylation of gibberellins (GA) precursors, rendering them unable to be converted to active GAs. Hydroxylates the C20-GA GA12 and GA53, but is not active on C19-GAs, like GA1, GA4, GA9 and GA20.</text>
</comment>
<comment type="catalytic activity">
    <reaction>
        <text>gibberellin A1 + 2-oxoglutarate + O2 = gibberellin A8 + succinate + CO2</text>
        <dbReference type="Rhea" id="RHEA:15005"/>
        <dbReference type="ChEBI" id="CHEBI:15379"/>
        <dbReference type="ChEBI" id="CHEBI:16526"/>
        <dbReference type="ChEBI" id="CHEBI:16810"/>
        <dbReference type="ChEBI" id="CHEBI:30031"/>
        <dbReference type="ChEBI" id="CHEBI:58524"/>
        <dbReference type="ChEBI" id="CHEBI:58594"/>
        <dbReference type="EC" id="1.14.11.13"/>
    </reaction>
</comment>
<comment type="cofactor">
    <cofactor evidence="2">
        <name>Fe(2+)</name>
        <dbReference type="ChEBI" id="CHEBI:29033"/>
    </cofactor>
    <text evidence="2">Binds 1 Fe(2+) ion per subunit.</text>
</comment>
<comment type="pathway">
    <text>Plant hormone biosynthesis; gibberellin biosynthesis.</text>
</comment>
<comment type="interaction">
    <interactant intactId="EBI-25513059">
        <id>Q9C6I4</id>
    </interactant>
    <interactant intactId="EBI-1250484">
        <id>Q9M384</id>
        <label>SCR</label>
    </interactant>
    <organismsDiffer>false</organismsDiffer>
    <experiments>3</experiments>
</comment>
<comment type="induction">
    <text evidence="4">Not regulated by auxin. Down-regulated by paclobutrazol.</text>
</comment>
<comment type="similarity">
    <text evidence="5">Belongs to the iron/ascorbate-dependent oxidoreductase family. GA2OX subfamily.</text>
</comment>
<gene>
    <name type="primary">GA2OX7</name>
    <name type="ordered locus">At1g50960</name>
    <name type="ORF">F8A12.18</name>
</gene>
<accession>Q9C6I4</accession>
<proteinExistence type="evidence at protein level"/>
<protein>
    <recommendedName>
        <fullName>Gibberellin 2-beta-dioxygenase 7</fullName>
        <ecNumber>1.14.11.13</ecNumber>
    </recommendedName>
    <alternativeName>
        <fullName>GA 2-oxidase 7</fullName>
    </alternativeName>
    <alternativeName>
        <fullName>Gibberellin 2-beta-hydroxylase 7</fullName>
    </alternativeName>
    <alternativeName>
        <fullName>Gibberellin 2-oxidase 7</fullName>
    </alternativeName>
</protein>
<dbReference type="EC" id="1.14.11.13"/>
<dbReference type="EMBL" id="AC079284">
    <property type="protein sequence ID" value="AAG50945.1"/>
    <property type="molecule type" value="Genomic_DNA"/>
</dbReference>
<dbReference type="EMBL" id="CP002684">
    <property type="protein sequence ID" value="AEE32606.1"/>
    <property type="molecule type" value="Genomic_DNA"/>
</dbReference>
<dbReference type="PIR" id="G96546">
    <property type="entry name" value="G96546"/>
</dbReference>
<dbReference type="RefSeq" id="NP_175509.1">
    <property type="nucleotide sequence ID" value="NM_103976.2"/>
</dbReference>
<dbReference type="SMR" id="Q9C6I4"/>
<dbReference type="BioGRID" id="26743">
    <property type="interactions" value="1"/>
</dbReference>
<dbReference type="IntAct" id="Q9C6I4">
    <property type="interactions" value="1"/>
</dbReference>
<dbReference type="STRING" id="3702.Q9C6I4"/>
<dbReference type="PaxDb" id="3702-AT1G50960.1"/>
<dbReference type="EnsemblPlants" id="AT1G50960.1">
    <property type="protein sequence ID" value="AT1G50960.1"/>
    <property type="gene ID" value="AT1G50960"/>
</dbReference>
<dbReference type="GeneID" id="841518"/>
<dbReference type="Gramene" id="AT1G50960.1">
    <property type="protein sequence ID" value="AT1G50960.1"/>
    <property type="gene ID" value="AT1G50960"/>
</dbReference>
<dbReference type="KEGG" id="ath:AT1G50960"/>
<dbReference type="Araport" id="AT1G50960"/>
<dbReference type="TAIR" id="AT1G50960">
    <property type="gene designation" value="GA2OX7"/>
</dbReference>
<dbReference type="eggNOG" id="KOG0143">
    <property type="taxonomic scope" value="Eukaryota"/>
</dbReference>
<dbReference type="HOGENOM" id="CLU_010119_15_1_1"/>
<dbReference type="InParanoid" id="Q9C6I4"/>
<dbReference type="OMA" id="AQMICEI"/>
<dbReference type="PhylomeDB" id="Q9C6I4"/>
<dbReference type="BioCyc" id="ARA:AT1G50960-MONOMER"/>
<dbReference type="BioCyc" id="MetaCyc:AT1G50960-MONOMER"/>
<dbReference type="UniPathway" id="UPA00390"/>
<dbReference type="PRO" id="PR:Q9C6I4"/>
<dbReference type="Proteomes" id="UP000006548">
    <property type="component" value="Chromosome 1"/>
</dbReference>
<dbReference type="ExpressionAtlas" id="Q9C6I4">
    <property type="expression patterns" value="baseline and differential"/>
</dbReference>
<dbReference type="GO" id="GO:0045543">
    <property type="term" value="F:gibberellin 2-beta-dioxygenase activity"/>
    <property type="evidence" value="ECO:0007669"/>
    <property type="project" value="UniProtKB-EC"/>
</dbReference>
<dbReference type="GO" id="GO:0046872">
    <property type="term" value="F:metal ion binding"/>
    <property type="evidence" value="ECO:0007669"/>
    <property type="project" value="UniProtKB-KW"/>
</dbReference>
<dbReference type="GO" id="GO:0009686">
    <property type="term" value="P:gibberellin biosynthetic process"/>
    <property type="evidence" value="ECO:0007669"/>
    <property type="project" value="UniProtKB-UniPathway"/>
</dbReference>
<dbReference type="GO" id="GO:0009685">
    <property type="term" value="P:gibberellin metabolic process"/>
    <property type="evidence" value="ECO:0000314"/>
    <property type="project" value="TAIR"/>
</dbReference>
<dbReference type="GO" id="GO:0009651">
    <property type="term" value="P:response to salt stress"/>
    <property type="evidence" value="ECO:0000316"/>
    <property type="project" value="TAIR"/>
</dbReference>
<dbReference type="FunFam" id="2.60.120.330:FF:000050">
    <property type="entry name" value="Gibberellin 2-beta-dioxygenase 7"/>
    <property type="match status" value="1"/>
</dbReference>
<dbReference type="Gene3D" id="2.60.120.330">
    <property type="entry name" value="B-lactam Antibiotic, Isopenicillin N Synthase, Chain"/>
    <property type="match status" value="1"/>
</dbReference>
<dbReference type="InterPro" id="IPR026992">
    <property type="entry name" value="DIOX_N"/>
</dbReference>
<dbReference type="InterPro" id="IPR044861">
    <property type="entry name" value="IPNS-like_FE2OG_OXY"/>
</dbReference>
<dbReference type="InterPro" id="IPR027443">
    <property type="entry name" value="IPNS-like_sf"/>
</dbReference>
<dbReference type="InterPro" id="IPR050231">
    <property type="entry name" value="Iron_ascorbate_oxido_reductase"/>
</dbReference>
<dbReference type="InterPro" id="IPR005123">
    <property type="entry name" value="Oxoglu/Fe-dep_dioxygenase_dom"/>
</dbReference>
<dbReference type="PANTHER" id="PTHR47990">
    <property type="entry name" value="2-OXOGLUTARATE (2OG) AND FE(II)-DEPENDENT OXYGENASE SUPERFAMILY PROTEIN-RELATED"/>
    <property type="match status" value="1"/>
</dbReference>
<dbReference type="Pfam" id="PF03171">
    <property type="entry name" value="2OG-FeII_Oxy"/>
    <property type="match status" value="1"/>
</dbReference>
<dbReference type="Pfam" id="PF14226">
    <property type="entry name" value="DIOX_N"/>
    <property type="match status" value="1"/>
</dbReference>
<dbReference type="SUPFAM" id="SSF51197">
    <property type="entry name" value="Clavaminate synthase-like"/>
    <property type="match status" value="1"/>
</dbReference>
<dbReference type="PROSITE" id="PS51471">
    <property type="entry name" value="FE2OG_OXY"/>
    <property type="match status" value="1"/>
</dbReference>
<keyword id="KW-0223">Dioxygenase</keyword>
<keyword id="KW-0408">Iron</keyword>
<keyword id="KW-0479">Metal-binding</keyword>
<keyword id="KW-0560">Oxidoreductase</keyword>
<keyword id="KW-1185">Reference proteome</keyword>
<organism>
    <name type="scientific">Arabidopsis thaliana</name>
    <name type="common">Mouse-ear cress</name>
    <dbReference type="NCBI Taxonomy" id="3702"/>
    <lineage>
        <taxon>Eukaryota</taxon>
        <taxon>Viridiplantae</taxon>
        <taxon>Streptophyta</taxon>
        <taxon>Embryophyta</taxon>
        <taxon>Tracheophyta</taxon>
        <taxon>Spermatophyta</taxon>
        <taxon>Magnoliopsida</taxon>
        <taxon>eudicotyledons</taxon>
        <taxon>Gunneridae</taxon>
        <taxon>Pentapetalae</taxon>
        <taxon>rosids</taxon>
        <taxon>malvids</taxon>
        <taxon>Brassicales</taxon>
        <taxon>Brassicaceae</taxon>
        <taxon>Camelineae</taxon>
        <taxon>Arabidopsis</taxon>
    </lineage>
</organism>
<feature type="chain" id="PRO_0000067308" description="Gibberellin 2-beta-dioxygenase 7">
    <location>
        <begin position="1"/>
        <end position="336"/>
    </location>
</feature>
<feature type="domain" description="Fe2OG dioxygenase" evidence="2">
    <location>
        <begin position="191"/>
        <end position="291"/>
    </location>
</feature>
<feature type="active site" evidence="1">
    <location>
        <position position="282"/>
    </location>
</feature>
<feature type="binding site" evidence="2">
    <location>
        <position position="216"/>
    </location>
    <ligand>
        <name>Fe cation</name>
        <dbReference type="ChEBI" id="CHEBI:24875"/>
    </ligand>
</feature>
<feature type="binding site" evidence="2">
    <location>
        <position position="218"/>
    </location>
    <ligand>
        <name>Fe cation</name>
        <dbReference type="ChEBI" id="CHEBI:24875"/>
    </ligand>
</feature>
<feature type="binding site" evidence="2">
    <location>
        <position position="272"/>
    </location>
    <ligand>
        <name>Fe cation</name>
        <dbReference type="ChEBI" id="CHEBI:24875"/>
    </ligand>
</feature>
<feature type="binding site" evidence="2">
    <location>
        <position position="282"/>
    </location>
    <ligand>
        <name>2-oxoglutarate</name>
        <dbReference type="ChEBI" id="CHEBI:16810"/>
    </ligand>
</feature>
<sequence>MASQPPFKTNFCSIFGSSFPNSTSESNTNTSTIQTSGIKLPVIDLSHLTSGEEVKRKRCVKQMVAAAKEWGFFQIVNHGIPKDVFEMMLLEEKKLFDQPFSVKVRERFSDLSKNSYRWGNPSATSPAQYSVSEAFHIILSEVSRISDDRNNLRTIVETYVQEIARVAQMICEILGKQVNVSSEYFENIFELENSFLRLNKYHPSVFGSEVFGLVPHTDTSFLTILSQDQIGGLELENNGQWISVKPCLEALTVNIGDMFQALSNGVYQSVRHRVISPANIERMSIAFFVCPYLETEIDCFGYPKKYRRFSFREYKEQSEHDVKETGDKVGLSRFLI</sequence>
<name>G2OX7_ARATH</name>
<evidence type="ECO:0000255" key="1"/>
<evidence type="ECO:0000255" key="2">
    <source>
        <dbReference type="PROSITE-ProRule" id="PRU00805"/>
    </source>
</evidence>
<evidence type="ECO:0000269" key="3">
    <source>
    </source>
</evidence>
<evidence type="ECO:0000269" key="4">
    <source>
    </source>
</evidence>
<evidence type="ECO:0000305" key="5"/>
<reference key="1">
    <citation type="journal article" date="2000" name="Nature">
        <title>Sequence and analysis of chromosome 1 of the plant Arabidopsis thaliana.</title>
        <authorList>
            <person name="Theologis A."/>
            <person name="Ecker J.R."/>
            <person name="Palm C.J."/>
            <person name="Federspiel N.A."/>
            <person name="Kaul S."/>
            <person name="White O."/>
            <person name="Alonso J."/>
            <person name="Altafi H."/>
            <person name="Araujo R."/>
            <person name="Bowman C.L."/>
            <person name="Brooks S.Y."/>
            <person name="Buehler E."/>
            <person name="Chan A."/>
            <person name="Chao Q."/>
            <person name="Chen H."/>
            <person name="Cheuk R.F."/>
            <person name="Chin C.W."/>
            <person name="Chung M.K."/>
            <person name="Conn L."/>
            <person name="Conway A.B."/>
            <person name="Conway A.R."/>
            <person name="Creasy T.H."/>
            <person name="Dewar K."/>
            <person name="Dunn P."/>
            <person name="Etgu P."/>
            <person name="Feldblyum T.V."/>
            <person name="Feng J.-D."/>
            <person name="Fong B."/>
            <person name="Fujii C.Y."/>
            <person name="Gill J.E."/>
            <person name="Goldsmith A.D."/>
            <person name="Haas B."/>
            <person name="Hansen N.F."/>
            <person name="Hughes B."/>
            <person name="Huizar L."/>
            <person name="Hunter J.L."/>
            <person name="Jenkins J."/>
            <person name="Johnson-Hopson C."/>
            <person name="Khan S."/>
            <person name="Khaykin E."/>
            <person name="Kim C.J."/>
            <person name="Koo H.L."/>
            <person name="Kremenetskaia I."/>
            <person name="Kurtz D.B."/>
            <person name="Kwan A."/>
            <person name="Lam B."/>
            <person name="Langin-Hooper S."/>
            <person name="Lee A."/>
            <person name="Lee J.M."/>
            <person name="Lenz C.A."/>
            <person name="Li J.H."/>
            <person name="Li Y.-P."/>
            <person name="Lin X."/>
            <person name="Liu S.X."/>
            <person name="Liu Z.A."/>
            <person name="Luros J.S."/>
            <person name="Maiti R."/>
            <person name="Marziali A."/>
            <person name="Militscher J."/>
            <person name="Miranda M."/>
            <person name="Nguyen M."/>
            <person name="Nierman W.C."/>
            <person name="Osborne B.I."/>
            <person name="Pai G."/>
            <person name="Peterson J."/>
            <person name="Pham P.K."/>
            <person name="Rizzo M."/>
            <person name="Rooney T."/>
            <person name="Rowley D."/>
            <person name="Sakano H."/>
            <person name="Salzberg S.L."/>
            <person name="Schwartz J.R."/>
            <person name="Shinn P."/>
            <person name="Southwick A.M."/>
            <person name="Sun H."/>
            <person name="Tallon L.J."/>
            <person name="Tambunga G."/>
            <person name="Toriumi M.J."/>
            <person name="Town C.D."/>
            <person name="Utterback T."/>
            <person name="Van Aken S."/>
            <person name="Vaysberg M."/>
            <person name="Vysotskaia V.S."/>
            <person name="Walker M."/>
            <person name="Wu D."/>
            <person name="Yu G."/>
            <person name="Fraser C.M."/>
            <person name="Venter J.C."/>
            <person name="Davis R.W."/>
        </authorList>
    </citation>
    <scope>NUCLEOTIDE SEQUENCE [LARGE SCALE GENOMIC DNA]</scope>
    <source>
        <strain>cv. Columbia</strain>
    </source>
</reference>
<reference key="2">
    <citation type="journal article" date="2017" name="Plant J.">
        <title>Araport11: a complete reannotation of the Arabidopsis thaliana reference genome.</title>
        <authorList>
            <person name="Cheng C.Y."/>
            <person name="Krishnakumar V."/>
            <person name="Chan A.P."/>
            <person name="Thibaud-Nissen F."/>
            <person name="Schobel S."/>
            <person name="Town C.D."/>
        </authorList>
    </citation>
    <scope>GENOME REANNOTATION</scope>
    <source>
        <strain>cv. Columbia</strain>
    </source>
</reference>
<reference key="3">
    <citation type="journal article" date="2003" name="Plant Cell">
        <title>Overexpression of a novel class of gibberellin 2-oxidases decreases gibberellin levels and creates dwarf plants.</title>
        <authorList>
            <person name="Schomburg F.M."/>
            <person name="Bizzell C.M."/>
            <person name="Lee D.J."/>
            <person name="Zeevaart J.A.D."/>
            <person name="Amasino R.M."/>
        </authorList>
    </citation>
    <scope>FUNCTION</scope>
    <scope>CHARACTERIZATION</scope>
</reference>
<reference key="4">
    <citation type="journal article" date="2006" name="Plant Physiol.">
        <title>Transcriptional regulation of gibberellin metabolism genes by auxin signaling in Arabidopsis.</title>
        <authorList>
            <person name="Frigerio M."/>
            <person name="Alabadi D."/>
            <person name="Perez-Gomez J."/>
            <person name="Garcia-Carcel L."/>
            <person name="Phillips A.L."/>
            <person name="Hedden P."/>
            <person name="Blazquez M.A."/>
        </authorList>
    </citation>
    <scope>INDUCTION BY AUXIN AND PACLOBUTRAZOL</scope>
</reference>
<reference key="5">
    <citation type="journal article" date="2011" name="Gene">
        <title>Evolutionary analysis of three gibberellin oxidase genes in rice, Arabidopsis, and soybean.</title>
        <authorList>
            <person name="Han F."/>
            <person name="Zhu B."/>
        </authorList>
    </citation>
    <scope>GENE FAMILY</scope>
</reference>